<protein>
    <recommendedName>
        <fullName evidence="9">Protein NBR1 homolog</fullName>
        <shortName evidence="8">AtNBR1</shortName>
    </recommendedName>
    <alternativeName>
        <fullName evidence="11">At4g24690</fullName>
    </alternativeName>
</protein>
<evidence type="ECO:0000255" key="1">
    <source>
        <dbReference type="PROSITE-ProRule" id="PRU00212"/>
    </source>
</evidence>
<evidence type="ECO:0000255" key="2">
    <source>
        <dbReference type="PROSITE-ProRule" id="PRU00228"/>
    </source>
</evidence>
<evidence type="ECO:0000255" key="3">
    <source>
        <dbReference type="PROSITE-ProRule" id="PRU01081"/>
    </source>
</evidence>
<evidence type="ECO:0000256" key="4">
    <source>
        <dbReference type="SAM" id="MobiDB-lite"/>
    </source>
</evidence>
<evidence type="ECO:0000269" key="5">
    <source>
    </source>
</evidence>
<evidence type="ECO:0000269" key="6">
    <source>
    </source>
</evidence>
<evidence type="ECO:0000269" key="7">
    <source>
    </source>
</evidence>
<evidence type="ECO:0000303" key="8">
    <source>
    </source>
</evidence>
<evidence type="ECO:0000305" key="9"/>
<evidence type="ECO:0000312" key="10">
    <source>
        <dbReference type="Araport" id="AT4G24690"/>
    </source>
</evidence>
<evidence type="ECO:0000312" key="11">
    <source>
        <dbReference type="EMBL" id="AAP37784.1"/>
    </source>
</evidence>
<evidence type="ECO:0000312" key="12">
    <source>
        <dbReference type="EMBL" id="CAA22994.1"/>
    </source>
</evidence>
<evidence type="ECO:0007744" key="13">
    <source>
    </source>
</evidence>
<evidence type="ECO:0007829" key="14">
    <source>
        <dbReference type="PDB" id="6TGS"/>
    </source>
</evidence>
<organism>
    <name type="scientific">Arabidopsis thaliana</name>
    <name type="common">Mouse-ear cress</name>
    <dbReference type="NCBI Taxonomy" id="3702"/>
    <lineage>
        <taxon>Eukaryota</taxon>
        <taxon>Viridiplantae</taxon>
        <taxon>Streptophyta</taxon>
        <taxon>Embryophyta</taxon>
        <taxon>Tracheophyta</taxon>
        <taxon>Spermatophyta</taxon>
        <taxon>Magnoliopsida</taxon>
        <taxon>eudicotyledons</taxon>
        <taxon>Gunneridae</taxon>
        <taxon>Pentapetalae</taxon>
        <taxon>rosids</taxon>
        <taxon>malvids</taxon>
        <taxon>Brassicales</taxon>
        <taxon>Brassicaceae</taxon>
        <taxon>Camelineae</taxon>
        <taxon>Arabidopsis</taxon>
    </lineage>
</organism>
<accession>Q9SB64</accession>
<name>NBR1_ARATH</name>
<sequence>MESTANALVVKVSYGGVLRRFRVPVKANGQLDLEMAGLKEKIAALFNLSADAELSLTYSDEDGDVVALVDDNDLFDVTNQRLKFLKINVNAGVSTNSAAPESSGSSTPAGMPNPVSKIQKGINDVLMAVPNPMRDTISKVYMDLASKASTSSPVVGEMLDCISKLGQLSIPQESSPCSPVTKPGSSGASLSRDVPSAGGKKDISERTQTGRKPVNLNEPTGAHSKTSGHVPNSSGLGANFNECPFSGSTMNYSCPNPVNLNKHPRRVCHSKKSTNGDYWTSLGVFHKGIRCDGCGVLPITGPRFKSKVKEDYDLCTICYSVMGNEGDYTRMDKPVSVQHLHPFRGPFTQFPNPWLSHPVPRATNGGAPLRCTRPKLDSRFVLDVNVIDGTVVAPSAPFTKIWKMRNSGSLVWPQGTQIVWIGGDRFCNSLSVDLQIPKEGVPIYSELDVKVDFVAPELPGRYISYWRMATSDGAKFGQRVWVLIHVDASLKNSVVNEFHGLNLNASPSLDENFPSEFLGIMNYESAQPGSSSVNPGTVKGTDLEGEVGETQAVEKENLLVGEAHPAIPHGHSPSSSSSSFNMVDFPSMPAVEVLSGGSSSTTKDVPVPLQEDIEKNDVEITMLKELEEMGFKEIDLNKEILRDNEYNLEQSVDALCGVSEWDPILEELQEMGFCDDVTNKRLLKKNNGSIKGVVMDLLTGEKEA</sequence>
<dbReference type="EMBL" id="AL035356">
    <property type="protein sequence ID" value="CAA22994.1"/>
    <property type="molecule type" value="Genomic_DNA"/>
</dbReference>
<dbReference type="EMBL" id="AL161562">
    <property type="protein sequence ID" value="CAB79379.1"/>
    <property type="molecule type" value="Genomic_DNA"/>
</dbReference>
<dbReference type="EMBL" id="CP002687">
    <property type="protein sequence ID" value="AEE84943.1"/>
    <property type="molecule type" value="Genomic_DNA"/>
</dbReference>
<dbReference type="EMBL" id="AY062827">
    <property type="protein sequence ID" value="AAL32905.1"/>
    <property type="molecule type" value="mRNA"/>
</dbReference>
<dbReference type="EMBL" id="AY128759">
    <property type="protein sequence ID" value="AAM91159.1"/>
    <property type="molecule type" value="mRNA"/>
</dbReference>
<dbReference type="EMBL" id="AY140081">
    <property type="protein sequence ID" value="AAM98222.1"/>
    <property type="molecule type" value="mRNA"/>
</dbReference>
<dbReference type="EMBL" id="BT008425">
    <property type="protein sequence ID" value="AAP37784.1"/>
    <property type="molecule type" value="mRNA"/>
</dbReference>
<dbReference type="PIR" id="T05565">
    <property type="entry name" value="T05565"/>
</dbReference>
<dbReference type="RefSeq" id="NP_194200.1">
    <property type="nucleotide sequence ID" value="NM_118602.4"/>
</dbReference>
<dbReference type="PDB" id="6TGN">
    <property type="method" value="EM"/>
    <property type="resolution" value="4.00 A"/>
    <property type="chains" value="A=1-94"/>
</dbReference>
<dbReference type="PDB" id="6TGP">
    <property type="method" value="EM"/>
    <property type="resolution" value="4.50 A"/>
    <property type="chains" value="A/B=1-94"/>
</dbReference>
<dbReference type="PDB" id="6TGS">
    <property type="method" value="X-ray"/>
    <property type="resolution" value="1.53 A"/>
    <property type="chains" value="A=1-94"/>
</dbReference>
<dbReference type="PDBsum" id="6TGN"/>
<dbReference type="PDBsum" id="6TGP"/>
<dbReference type="PDBsum" id="6TGS"/>
<dbReference type="EMDB" id="EMD-10499"/>
<dbReference type="EMDB" id="EMD-10500"/>
<dbReference type="SMR" id="Q9SB64"/>
<dbReference type="FunCoup" id="Q9SB64">
    <property type="interactions" value="1036"/>
</dbReference>
<dbReference type="IntAct" id="Q9SB64">
    <property type="interactions" value="8"/>
</dbReference>
<dbReference type="STRING" id="3702.Q9SB64"/>
<dbReference type="iPTMnet" id="Q9SB64"/>
<dbReference type="PaxDb" id="3702-AT4G24690.1"/>
<dbReference type="ProteomicsDB" id="251084"/>
<dbReference type="EnsemblPlants" id="AT4G24690.1">
    <property type="protein sequence ID" value="AT4G24690.1"/>
    <property type="gene ID" value="AT4G24690"/>
</dbReference>
<dbReference type="GeneID" id="828571"/>
<dbReference type="Gramene" id="AT4G24690.1">
    <property type="protein sequence ID" value="AT4G24690.1"/>
    <property type="gene ID" value="AT4G24690"/>
</dbReference>
<dbReference type="KEGG" id="ath:AT4G24690"/>
<dbReference type="Araport" id="AT4G24690"/>
<dbReference type="TAIR" id="AT4G24690">
    <property type="gene designation" value="NBR1"/>
</dbReference>
<dbReference type="eggNOG" id="KOG4351">
    <property type="taxonomic scope" value="Eukaryota"/>
</dbReference>
<dbReference type="eggNOG" id="KOG4582">
    <property type="taxonomic scope" value="Eukaryota"/>
</dbReference>
<dbReference type="HOGENOM" id="CLU_017180_0_0_1"/>
<dbReference type="InParanoid" id="Q9SB64"/>
<dbReference type="OMA" id="CGVTPIA"/>
<dbReference type="PhylomeDB" id="Q9SB64"/>
<dbReference type="PRO" id="PR:Q9SB64"/>
<dbReference type="Proteomes" id="UP000006548">
    <property type="component" value="Chromosome 4"/>
</dbReference>
<dbReference type="ExpressionAtlas" id="Q9SB64">
    <property type="expression patterns" value="baseline and differential"/>
</dbReference>
<dbReference type="GO" id="GO:0005776">
    <property type="term" value="C:autophagosome"/>
    <property type="evidence" value="ECO:0000314"/>
    <property type="project" value="TAIR"/>
</dbReference>
<dbReference type="GO" id="GO:0005737">
    <property type="term" value="C:cytoplasm"/>
    <property type="evidence" value="ECO:0007005"/>
    <property type="project" value="TAIR"/>
</dbReference>
<dbReference type="GO" id="GO:0005773">
    <property type="term" value="C:vacuole"/>
    <property type="evidence" value="ECO:0000314"/>
    <property type="project" value="TAIR"/>
</dbReference>
<dbReference type="GO" id="GO:0043130">
    <property type="term" value="F:ubiquitin binding"/>
    <property type="evidence" value="ECO:0000314"/>
    <property type="project" value="TAIR"/>
</dbReference>
<dbReference type="GO" id="GO:0008270">
    <property type="term" value="F:zinc ion binding"/>
    <property type="evidence" value="ECO:0007669"/>
    <property type="project" value="UniProtKB-KW"/>
</dbReference>
<dbReference type="GO" id="GO:0051258">
    <property type="term" value="P:protein polymerization"/>
    <property type="evidence" value="ECO:0000314"/>
    <property type="project" value="TAIR"/>
</dbReference>
<dbReference type="GO" id="GO:0071211">
    <property type="term" value="P:protein targeting to vacuole involved in autophagy"/>
    <property type="evidence" value="ECO:0000315"/>
    <property type="project" value="TAIR"/>
</dbReference>
<dbReference type="CDD" id="cd14947">
    <property type="entry name" value="NBR1_like"/>
    <property type="match status" value="1"/>
</dbReference>
<dbReference type="CDD" id="cd06398">
    <property type="entry name" value="PB1_Joka2"/>
    <property type="match status" value="1"/>
</dbReference>
<dbReference type="CDD" id="cd14319">
    <property type="entry name" value="UBA_NBR1"/>
    <property type="match status" value="2"/>
</dbReference>
<dbReference type="FunFam" id="1.10.8.10:FF:000085">
    <property type="entry name" value="protein NBR1 homolog"/>
    <property type="match status" value="1"/>
</dbReference>
<dbReference type="Gene3D" id="3.30.60.90">
    <property type="match status" value="1"/>
</dbReference>
<dbReference type="Gene3D" id="1.10.8.10">
    <property type="entry name" value="DNA helicase RuvA subunit, C-terminal domain"/>
    <property type="match status" value="2"/>
</dbReference>
<dbReference type="Gene3D" id="2.60.40.10">
    <property type="entry name" value="Immunoglobulins"/>
    <property type="match status" value="1"/>
</dbReference>
<dbReference type="Gene3D" id="3.10.20.90">
    <property type="entry name" value="Phosphatidylinositol 3-kinase Catalytic Subunit, Chain A, domain 1"/>
    <property type="match status" value="1"/>
</dbReference>
<dbReference type="InterPro" id="IPR013783">
    <property type="entry name" value="Ig-like_fold"/>
</dbReference>
<dbReference type="InterPro" id="IPR032350">
    <property type="entry name" value="N_BRCA1_central"/>
</dbReference>
<dbReference type="InterPro" id="IPR000270">
    <property type="entry name" value="PB1_dom"/>
</dbReference>
<dbReference type="InterPro" id="IPR009060">
    <property type="entry name" value="UBA-like_sf"/>
</dbReference>
<dbReference type="InterPro" id="IPR056893">
    <property type="entry name" value="UBA_NBR1_C"/>
</dbReference>
<dbReference type="InterPro" id="IPR000433">
    <property type="entry name" value="Znf_ZZ"/>
</dbReference>
<dbReference type="InterPro" id="IPR043145">
    <property type="entry name" value="Znf_ZZ_sf"/>
</dbReference>
<dbReference type="PANTHER" id="PTHR20930">
    <property type="entry name" value="OVARIAN CARCINOMA ANTIGEN CA125-RELATED"/>
    <property type="match status" value="1"/>
</dbReference>
<dbReference type="PANTHER" id="PTHR20930:SF0">
    <property type="entry name" value="PROTEIN ILRUN"/>
    <property type="match status" value="1"/>
</dbReference>
<dbReference type="Pfam" id="PF16158">
    <property type="entry name" value="N_BRCA1_IG"/>
    <property type="match status" value="1"/>
</dbReference>
<dbReference type="Pfam" id="PF00564">
    <property type="entry name" value="PB1"/>
    <property type="match status" value="1"/>
</dbReference>
<dbReference type="Pfam" id="PF24932">
    <property type="entry name" value="UBA_NBR1_C"/>
    <property type="match status" value="2"/>
</dbReference>
<dbReference type="Pfam" id="PF00569">
    <property type="entry name" value="ZZ"/>
    <property type="match status" value="1"/>
</dbReference>
<dbReference type="SMART" id="SM00666">
    <property type="entry name" value="PB1"/>
    <property type="match status" value="1"/>
</dbReference>
<dbReference type="SMART" id="SM00291">
    <property type="entry name" value="ZnF_ZZ"/>
    <property type="match status" value="1"/>
</dbReference>
<dbReference type="SUPFAM" id="SSF54277">
    <property type="entry name" value="CAD &amp; PB1 domains"/>
    <property type="match status" value="1"/>
</dbReference>
<dbReference type="SUPFAM" id="SSF57850">
    <property type="entry name" value="RING/U-box"/>
    <property type="match status" value="1"/>
</dbReference>
<dbReference type="SUPFAM" id="SSF46934">
    <property type="entry name" value="UBA-like"/>
    <property type="match status" value="1"/>
</dbReference>
<dbReference type="PROSITE" id="PS50135">
    <property type="entry name" value="ZF_ZZ_2"/>
    <property type="match status" value="1"/>
</dbReference>
<gene>
    <name evidence="8" type="primary">NBR1</name>
    <name evidence="10" type="ordered locus">At4g24690</name>
    <name evidence="12" type="ORF">F22K18.110</name>
</gene>
<reference key="1">
    <citation type="journal article" date="1999" name="Nature">
        <title>Sequence and analysis of chromosome 4 of the plant Arabidopsis thaliana.</title>
        <authorList>
            <person name="Mayer K.F.X."/>
            <person name="Schueller C."/>
            <person name="Wambutt R."/>
            <person name="Murphy G."/>
            <person name="Volckaert G."/>
            <person name="Pohl T."/>
            <person name="Duesterhoeft A."/>
            <person name="Stiekema W."/>
            <person name="Entian K.-D."/>
            <person name="Terryn N."/>
            <person name="Harris B."/>
            <person name="Ansorge W."/>
            <person name="Brandt P."/>
            <person name="Grivell L.A."/>
            <person name="Rieger M."/>
            <person name="Weichselgartner M."/>
            <person name="de Simone V."/>
            <person name="Obermaier B."/>
            <person name="Mache R."/>
            <person name="Mueller M."/>
            <person name="Kreis M."/>
            <person name="Delseny M."/>
            <person name="Puigdomenech P."/>
            <person name="Watson M."/>
            <person name="Schmidtheini T."/>
            <person name="Reichert B."/>
            <person name="Portetelle D."/>
            <person name="Perez-Alonso M."/>
            <person name="Boutry M."/>
            <person name="Bancroft I."/>
            <person name="Vos P."/>
            <person name="Hoheisel J."/>
            <person name="Zimmermann W."/>
            <person name="Wedler H."/>
            <person name="Ridley P."/>
            <person name="Langham S.-A."/>
            <person name="McCullagh B."/>
            <person name="Bilham L."/>
            <person name="Robben J."/>
            <person name="van der Schueren J."/>
            <person name="Grymonprez B."/>
            <person name="Chuang Y.-J."/>
            <person name="Vandenbussche F."/>
            <person name="Braeken M."/>
            <person name="Weltjens I."/>
            <person name="Voet M."/>
            <person name="Bastiaens I."/>
            <person name="Aert R."/>
            <person name="Defoor E."/>
            <person name="Weitzenegger T."/>
            <person name="Bothe G."/>
            <person name="Ramsperger U."/>
            <person name="Hilbert H."/>
            <person name="Braun M."/>
            <person name="Holzer E."/>
            <person name="Brandt A."/>
            <person name="Peters S."/>
            <person name="van Staveren M."/>
            <person name="Dirkse W."/>
            <person name="Mooijman P."/>
            <person name="Klein Lankhorst R."/>
            <person name="Rose M."/>
            <person name="Hauf J."/>
            <person name="Koetter P."/>
            <person name="Berneiser S."/>
            <person name="Hempel S."/>
            <person name="Feldpausch M."/>
            <person name="Lamberth S."/>
            <person name="Van den Daele H."/>
            <person name="De Keyser A."/>
            <person name="Buysshaert C."/>
            <person name="Gielen J."/>
            <person name="Villarroel R."/>
            <person name="De Clercq R."/>
            <person name="van Montagu M."/>
            <person name="Rogers J."/>
            <person name="Cronin A."/>
            <person name="Quail M.A."/>
            <person name="Bray-Allen S."/>
            <person name="Clark L."/>
            <person name="Doggett J."/>
            <person name="Hall S."/>
            <person name="Kay M."/>
            <person name="Lennard N."/>
            <person name="McLay K."/>
            <person name="Mayes R."/>
            <person name="Pettett A."/>
            <person name="Rajandream M.A."/>
            <person name="Lyne M."/>
            <person name="Benes V."/>
            <person name="Rechmann S."/>
            <person name="Borkova D."/>
            <person name="Bloecker H."/>
            <person name="Scharfe M."/>
            <person name="Grimm M."/>
            <person name="Loehnert T.-H."/>
            <person name="Dose S."/>
            <person name="de Haan M."/>
            <person name="Maarse A.C."/>
            <person name="Schaefer M."/>
            <person name="Mueller-Auer S."/>
            <person name="Gabel C."/>
            <person name="Fuchs M."/>
            <person name="Fartmann B."/>
            <person name="Granderath K."/>
            <person name="Dauner D."/>
            <person name="Herzl A."/>
            <person name="Neumann S."/>
            <person name="Argiriou A."/>
            <person name="Vitale D."/>
            <person name="Liguori R."/>
            <person name="Piravandi E."/>
            <person name="Massenet O."/>
            <person name="Quigley F."/>
            <person name="Clabauld G."/>
            <person name="Muendlein A."/>
            <person name="Felber R."/>
            <person name="Schnabl S."/>
            <person name="Hiller R."/>
            <person name="Schmidt W."/>
            <person name="Lecharny A."/>
            <person name="Aubourg S."/>
            <person name="Chefdor F."/>
            <person name="Cooke R."/>
            <person name="Berger C."/>
            <person name="Monfort A."/>
            <person name="Casacuberta E."/>
            <person name="Gibbons T."/>
            <person name="Weber N."/>
            <person name="Vandenbol M."/>
            <person name="Bargues M."/>
            <person name="Terol J."/>
            <person name="Torres A."/>
            <person name="Perez-Perez A."/>
            <person name="Purnelle B."/>
            <person name="Bent E."/>
            <person name="Johnson S."/>
            <person name="Tacon D."/>
            <person name="Jesse T."/>
            <person name="Heijnen L."/>
            <person name="Schwarz S."/>
            <person name="Scholler P."/>
            <person name="Heber S."/>
            <person name="Francs P."/>
            <person name="Bielke C."/>
            <person name="Frishman D."/>
            <person name="Haase D."/>
            <person name="Lemcke K."/>
            <person name="Mewes H.-W."/>
            <person name="Stocker S."/>
            <person name="Zaccaria P."/>
            <person name="Bevan M."/>
            <person name="Wilson R.K."/>
            <person name="de la Bastide M."/>
            <person name="Habermann K."/>
            <person name="Parnell L."/>
            <person name="Dedhia N."/>
            <person name="Gnoj L."/>
            <person name="Schutz K."/>
            <person name="Huang E."/>
            <person name="Spiegel L."/>
            <person name="Sekhon M."/>
            <person name="Murray J."/>
            <person name="Sheet P."/>
            <person name="Cordes M."/>
            <person name="Abu-Threideh J."/>
            <person name="Stoneking T."/>
            <person name="Kalicki J."/>
            <person name="Graves T."/>
            <person name="Harmon G."/>
            <person name="Edwards J."/>
            <person name="Latreille P."/>
            <person name="Courtney L."/>
            <person name="Cloud J."/>
            <person name="Abbott A."/>
            <person name="Scott K."/>
            <person name="Johnson D."/>
            <person name="Minx P."/>
            <person name="Bentley D."/>
            <person name="Fulton B."/>
            <person name="Miller N."/>
            <person name="Greco T."/>
            <person name="Kemp K."/>
            <person name="Kramer J."/>
            <person name="Fulton L."/>
            <person name="Mardis E."/>
            <person name="Dante M."/>
            <person name="Pepin K."/>
            <person name="Hillier L.W."/>
            <person name="Nelson J."/>
            <person name="Spieth J."/>
            <person name="Ryan E."/>
            <person name="Andrews S."/>
            <person name="Geisel C."/>
            <person name="Layman D."/>
            <person name="Du H."/>
            <person name="Ali J."/>
            <person name="Berghoff A."/>
            <person name="Jones K."/>
            <person name="Drone K."/>
            <person name="Cotton M."/>
            <person name="Joshu C."/>
            <person name="Antonoiu B."/>
            <person name="Zidanic M."/>
            <person name="Strong C."/>
            <person name="Sun H."/>
            <person name="Lamar B."/>
            <person name="Yordan C."/>
            <person name="Ma P."/>
            <person name="Zhong J."/>
            <person name="Preston R."/>
            <person name="Vil D."/>
            <person name="Shekher M."/>
            <person name="Matero A."/>
            <person name="Shah R."/>
            <person name="Swaby I.K."/>
            <person name="O'Shaughnessy A."/>
            <person name="Rodriguez M."/>
            <person name="Hoffman J."/>
            <person name="Till S."/>
            <person name="Granat S."/>
            <person name="Shohdy N."/>
            <person name="Hasegawa A."/>
            <person name="Hameed A."/>
            <person name="Lodhi M."/>
            <person name="Johnson A."/>
            <person name="Chen E."/>
            <person name="Marra M.A."/>
            <person name="Martienssen R."/>
            <person name="McCombie W.R."/>
        </authorList>
    </citation>
    <scope>NUCLEOTIDE SEQUENCE [LARGE SCALE GENOMIC DNA]</scope>
    <source>
        <strain>cv. Columbia</strain>
    </source>
</reference>
<reference key="2">
    <citation type="journal article" date="2017" name="Plant J.">
        <title>Araport11: a complete reannotation of the Arabidopsis thaliana reference genome.</title>
        <authorList>
            <person name="Cheng C.Y."/>
            <person name="Krishnakumar V."/>
            <person name="Chan A.P."/>
            <person name="Thibaud-Nissen F."/>
            <person name="Schobel S."/>
            <person name="Town C.D."/>
        </authorList>
    </citation>
    <scope>GENOME REANNOTATION</scope>
    <source>
        <strain>cv. Columbia</strain>
    </source>
</reference>
<reference key="3">
    <citation type="journal article" date="2003" name="Science">
        <title>Empirical analysis of transcriptional activity in the Arabidopsis genome.</title>
        <authorList>
            <person name="Yamada K."/>
            <person name="Lim J."/>
            <person name="Dale J.M."/>
            <person name="Chen H."/>
            <person name="Shinn P."/>
            <person name="Palm C.J."/>
            <person name="Southwick A.M."/>
            <person name="Wu H.C."/>
            <person name="Kim C.J."/>
            <person name="Nguyen M."/>
            <person name="Pham P.K."/>
            <person name="Cheuk R.F."/>
            <person name="Karlin-Newmann G."/>
            <person name="Liu S.X."/>
            <person name="Lam B."/>
            <person name="Sakano H."/>
            <person name="Wu T."/>
            <person name="Yu G."/>
            <person name="Miranda M."/>
            <person name="Quach H.L."/>
            <person name="Tripp M."/>
            <person name="Chang C.H."/>
            <person name="Lee J.M."/>
            <person name="Toriumi M.J."/>
            <person name="Chan M.M."/>
            <person name="Tang C.C."/>
            <person name="Onodera C.S."/>
            <person name="Deng J.M."/>
            <person name="Akiyama K."/>
            <person name="Ansari Y."/>
            <person name="Arakawa T."/>
            <person name="Banh J."/>
            <person name="Banno F."/>
            <person name="Bowser L."/>
            <person name="Brooks S.Y."/>
            <person name="Carninci P."/>
            <person name="Chao Q."/>
            <person name="Choy N."/>
            <person name="Enju A."/>
            <person name="Goldsmith A.D."/>
            <person name="Gurjal M."/>
            <person name="Hansen N.F."/>
            <person name="Hayashizaki Y."/>
            <person name="Johnson-Hopson C."/>
            <person name="Hsuan V.W."/>
            <person name="Iida K."/>
            <person name="Karnes M."/>
            <person name="Khan S."/>
            <person name="Koesema E."/>
            <person name="Ishida J."/>
            <person name="Jiang P.X."/>
            <person name="Jones T."/>
            <person name="Kawai J."/>
            <person name="Kamiya A."/>
            <person name="Meyers C."/>
            <person name="Nakajima M."/>
            <person name="Narusaka M."/>
            <person name="Seki M."/>
            <person name="Sakurai T."/>
            <person name="Satou M."/>
            <person name="Tamse R."/>
            <person name="Vaysberg M."/>
            <person name="Wallender E.K."/>
            <person name="Wong C."/>
            <person name="Yamamura Y."/>
            <person name="Yuan S."/>
            <person name="Shinozaki K."/>
            <person name="Davis R.W."/>
            <person name="Theologis A."/>
            <person name="Ecker J.R."/>
        </authorList>
    </citation>
    <scope>NUCLEOTIDE SEQUENCE [LARGE SCALE MRNA]</scope>
    <source>
        <strain>cv. Columbia</strain>
    </source>
</reference>
<reference key="4">
    <citation type="journal article" date="2011" name="Autophagy">
        <title>Plant NBR1 is a selective autophagy substrate and a functional hybrid of the mammalian autophagic adapters NBR1 and p62/SQSTM1.</title>
        <authorList>
            <person name="Svenning S."/>
            <person name="Lamark T."/>
            <person name="Krause K."/>
            <person name="Johansen T."/>
        </authorList>
    </citation>
    <scope>FUNCTION</scope>
    <scope>SUBUNIT</scope>
    <scope>INTERACTION WITH ATG8A; ATG8B; ATG8C; ATG8D; ATG8F AND ATG8I</scope>
    <scope>UBIQUITIN-BINDING</scope>
    <scope>SUBCELLULAR LOCATION</scope>
    <scope>DOMAIN</scope>
    <scope>LIR MOTIF</scope>
    <scope>MUTAGENESIS OF LYS-11; ARG-19; ASP-60; ASP-73; TRP-661 AND ILE-664</scope>
</reference>
<reference key="5">
    <citation type="journal article" date="2012" name="Mol. Cell. Proteomics">
        <title>Comparative large-scale characterisation of plant vs. mammal proteins reveals similar and idiosyncratic N-alpha acetylation features.</title>
        <authorList>
            <person name="Bienvenut W.V."/>
            <person name="Sumpton D."/>
            <person name="Martinez A."/>
            <person name="Lilla S."/>
            <person name="Espagne C."/>
            <person name="Meinnel T."/>
            <person name="Giglione C."/>
        </authorList>
    </citation>
    <scope>ACETYLATION [LARGE SCALE ANALYSIS] AT MET-1</scope>
    <scope>IDENTIFICATION BY MASS SPECTROMETRY [LARGE SCALE ANALYSIS]</scope>
</reference>
<reference key="6">
    <citation type="journal article" date="2013" name="PLoS Genet.">
        <title>NBR1-mediated selective autophagy targets insoluble ubiquitinated protein aggregates in plant stress responses.</title>
        <authorList>
            <person name="Zhou J."/>
            <person name="Wang J."/>
            <person name="Cheng Y."/>
            <person name="Chi Y.J."/>
            <person name="Fan B."/>
            <person name="Yu J.Q."/>
            <person name="Chen Z."/>
        </authorList>
    </citation>
    <scope>FUNCTION</scope>
    <scope>INDUCTION BY HEAT SHOCK</scope>
    <scope>LIR MOTIF</scope>
    <scope>MUTAGENESIS OF TRP-661 AND ILE-664</scope>
    <scope>DISRUPTION PHENOTYPE</scope>
</reference>
<reference key="7">
    <citation type="journal article" date="2014" name="PLoS Genet.">
        <title>E3 ubiquitin ligase CHIP and NBR1-mediated selective autophagy protect additively against proteotoxicity in plant stress responses.</title>
        <authorList>
            <person name="Zhou J."/>
            <person name="Zhang Y."/>
            <person name="Qi J."/>
            <person name="Chi Y."/>
            <person name="Fan B."/>
            <person name="Yu J.Q."/>
            <person name="Chen Z."/>
        </authorList>
    </citation>
    <scope>FUNCTION</scope>
</reference>
<comment type="function">
    <text evidence="5 6 7">Autophagic substrate degraded in the vacuole by non-selective autophagy. Requires ATG8 protein expression to be recognized as an autophagic substrate (PubMed:21606687). Acts probably as a receptor for autophagosomal degradation of ubiquitinated proteins. Targets ubiquitinated protein aggregates derived from denatured or damaged non-native proteins generated under stress conditions (PubMed:23341779). Functions additively with the E3 ubiquitin-protein ligase CHIP for autophagosomal degradation of proteotoxic aggregates formed under stress conditions (PubMed:24497840).</text>
</comment>
<comment type="subunit">
    <text evidence="5">Homodimer. Interacts with ATG8A, ATG8B, ATG8C, ATG8D, ATG8F and ATG8I. Binds to ubiquitin.</text>
</comment>
<comment type="subcellular location">
    <subcellularLocation>
        <location evidence="5">Cytoplasm</location>
    </subcellularLocation>
    <subcellularLocation>
        <location evidence="5">Vacuole</location>
    </subcellularLocation>
    <text evidence="5">Forms large punctated cytoplasmic structures. Recruited to the central vacuole by non-selective autophagy.</text>
</comment>
<comment type="induction">
    <text evidence="6">By heat shock.</text>
</comment>
<comment type="domain">
    <text evidence="5">The PB1 domain mediates homodimerization.</text>
</comment>
<comment type="domain">
    <text evidence="5">The UBA domain is required for ubiquitin binding.</text>
</comment>
<comment type="domain">
    <text evidence="5 6">The LIR motif is required for the interaction with ATG8 proteins and for vacuolar import (PubMed:21606687). The LIR motif is required for NBR1 function as receptor for autophagosomal degradation of ubiquitinated proteins under stress conditions (PubMed:23341779).</text>
</comment>
<comment type="disruption phenotype">
    <text evidence="6">No visible phenotype under normal growth conditions, but mutant plants show enhanced sensitivity to heat, oxidative, salt, and drought stresses.</text>
</comment>
<feature type="chain" id="PRO_0000434632" description="Protein NBR1 homolog">
    <location>
        <begin position="1"/>
        <end position="704"/>
    </location>
</feature>
<feature type="domain" description="PB1" evidence="3">
    <location>
        <begin position="7"/>
        <end position="92"/>
    </location>
</feature>
<feature type="domain" description="UBA" evidence="1">
    <location>
        <begin position="657"/>
        <end position="701"/>
    </location>
</feature>
<feature type="zinc finger region" description="ZZ-type; degenerate" evidence="2">
    <location>
        <begin position="286"/>
        <end position="336"/>
    </location>
</feature>
<feature type="region of interest" description="Disordered" evidence="4">
    <location>
        <begin position="95"/>
        <end position="114"/>
    </location>
</feature>
<feature type="region of interest" description="Disordered" evidence="4">
    <location>
        <begin position="171"/>
        <end position="233"/>
    </location>
</feature>
<feature type="short sequence motif" description="LIR" evidence="5 6">
    <location>
        <begin position="661"/>
        <end position="664"/>
    </location>
</feature>
<feature type="compositionally biased region" description="Polar residues" evidence="4">
    <location>
        <begin position="95"/>
        <end position="108"/>
    </location>
</feature>
<feature type="compositionally biased region" description="Polar residues" evidence="4">
    <location>
        <begin position="171"/>
        <end position="189"/>
    </location>
</feature>
<feature type="compositionally biased region" description="Polar residues" evidence="4">
    <location>
        <begin position="223"/>
        <end position="233"/>
    </location>
</feature>
<feature type="binding site" evidence="2">
    <location>
        <position position="291"/>
    </location>
    <ligand>
        <name>Zn(2+)</name>
        <dbReference type="ChEBI" id="CHEBI:29105"/>
    </ligand>
</feature>
<feature type="binding site" evidence="2">
    <location>
        <position position="294"/>
    </location>
    <ligand>
        <name>Zn(2+)</name>
        <dbReference type="ChEBI" id="CHEBI:29105"/>
    </ligand>
</feature>
<feature type="binding site" evidence="2">
    <location>
        <position position="315"/>
    </location>
    <ligand>
        <name>Zn(2+)</name>
        <dbReference type="ChEBI" id="CHEBI:29105"/>
    </ligand>
</feature>
<feature type="binding site" evidence="2">
    <location>
        <position position="318"/>
    </location>
    <ligand>
        <name>Zn(2+)</name>
        <dbReference type="ChEBI" id="CHEBI:29105"/>
    </ligand>
</feature>
<feature type="modified residue" description="N-acetylmethionine" evidence="13">
    <location>
        <position position="1"/>
    </location>
</feature>
<feature type="mutagenesis site" description="Loss of homodimerization; loss of capacity to form large aggregated cytoplasmic structures." evidence="5">
    <original>K</original>
    <variation>A</variation>
    <location>
        <position position="11"/>
    </location>
</feature>
<feature type="mutagenesis site" description="Loss of homodimerization." evidence="5">
    <original>R</original>
    <variation>A</variation>
    <location>
        <position position="19"/>
    </location>
</feature>
<feature type="mutagenesis site" description="Loss of homodimerization." evidence="5">
    <original>D</original>
    <variation>A</variation>
    <location>
        <position position="60"/>
    </location>
</feature>
<feature type="mutagenesis site" description="Loss of homodimerization." evidence="5">
    <original>D</original>
    <variation>A</variation>
    <location>
        <position position="73"/>
    </location>
</feature>
<feature type="mutagenesis site" description="Loss of binding to ATG8 proteins; when associated with A-664; Increased sensitivity to heat stress; when associated with A-664." evidence="5 6">
    <original>W</original>
    <variation>A</variation>
    <location>
        <position position="661"/>
    </location>
</feature>
<feature type="mutagenesis site" description="Loss of binding to ATG8 proteins; when associated with A-661; Increased sensitivity to heat stress; when associated with A-661." evidence="5 6">
    <original>I</original>
    <variation>A</variation>
    <location>
        <position position="664"/>
    </location>
</feature>
<feature type="strand" evidence="14">
    <location>
        <begin position="8"/>
        <end position="14"/>
    </location>
</feature>
<feature type="strand" evidence="14">
    <location>
        <begin position="17"/>
        <end position="23"/>
    </location>
</feature>
<feature type="helix" evidence="14">
    <location>
        <begin position="35"/>
        <end position="46"/>
    </location>
</feature>
<feature type="strand" evidence="14">
    <location>
        <begin position="55"/>
        <end position="59"/>
    </location>
</feature>
<feature type="strand" evidence="14">
    <location>
        <begin position="65"/>
        <end position="67"/>
    </location>
</feature>
<feature type="helix" evidence="14">
    <location>
        <begin position="71"/>
        <end position="79"/>
    </location>
</feature>
<feature type="strand" evidence="14">
    <location>
        <begin position="83"/>
        <end position="90"/>
    </location>
</feature>
<keyword id="KW-0002">3D-structure</keyword>
<keyword id="KW-0007">Acetylation</keyword>
<keyword id="KW-0072">Autophagy</keyword>
<keyword id="KW-0963">Cytoplasm</keyword>
<keyword id="KW-0479">Metal-binding</keyword>
<keyword id="KW-0653">Protein transport</keyword>
<keyword id="KW-1185">Reference proteome</keyword>
<keyword id="KW-0346">Stress response</keyword>
<keyword id="KW-0813">Transport</keyword>
<keyword id="KW-0926">Vacuole</keyword>
<keyword id="KW-0862">Zinc</keyword>
<keyword id="KW-0863">Zinc-finger</keyword>
<proteinExistence type="evidence at protein level"/>